<accession>P12050</accession>
<organism>
    <name type="scientific">Escherichia coli</name>
    <dbReference type="NCBI Taxonomy" id="562"/>
    <lineage>
        <taxon>Bacteria</taxon>
        <taxon>Pseudomonadati</taxon>
        <taxon>Pseudomonadota</taxon>
        <taxon>Gammaproteobacteria</taxon>
        <taxon>Enterobacterales</taxon>
        <taxon>Enterobacteriaceae</taxon>
        <taxon>Escherichia</taxon>
    </lineage>
</organism>
<gene>
    <name type="primary">fanD</name>
</gene>
<protein>
    <recommendedName>
        <fullName>Outer membrane usher protein FanD</fullName>
    </recommendedName>
</protein>
<dbReference type="EMBL" id="X13560">
    <property type="protein sequence ID" value="CAA31911.1"/>
    <property type="molecule type" value="Genomic_DNA"/>
</dbReference>
<dbReference type="EMBL" id="M35282">
    <property type="status" value="NOT_ANNOTATED_CDS"/>
    <property type="molecule type" value="Genomic_DNA"/>
</dbReference>
<dbReference type="EMBL" id="X56001">
    <property type="protein sequence ID" value="CAA39473.1"/>
    <property type="molecule type" value="Genomic_DNA"/>
</dbReference>
<dbReference type="PIR" id="S02755">
    <property type="entry name" value="S02755"/>
</dbReference>
<dbReference type="SMR" id="P12050"/>
<dbReference type="GO" id="GO:0009279">
    <property type="term" value="C:cell outer membrane"/>
    <property type="evidence" value="ECO:0007669"/>
    <property type="project" value="UniProtKB-SubCell"/>
</dbReference>
<dbReference type="GO" id="GO:0015473">
    <property type="term" value="F:fimbrial usher porin activity"/>
    <property type="evidence" value="ECO:0007669"/>
    <property type="project" value="InterPro"/>
</dbReference>
<dbReference type="GO" id="GO:0009297">
    <property type="term" value="P:pilus assembly"/>
    <property type="evidence" value="ECO:0007669"/>
    <property type="project" value="InterPro"/>
</dbReference>
<dbReference type="Gene3D" id="2.60.40.3110">
    <property type="match status" value="1"/>
</dbReference>
<dbReference type="Gene3D" id="3.10.20.410">
    <property type="match status" value="1"/>
</dbReference>
<dbReference type="Gene3D" id="2.60.40.2610">
    <property type="entry name" value="Outer membrane usher protein FimD, plug domain"/>
    <property type="match status" value="1"/>
</dbReference>
<dbReference type="InterPro" id="IPR000015">
    <property type="entry name" value="Fimb_usher"/>
</dbReference>
<dbReference type="InterPro" id="IPR018030">
    <property type="entry name" value="Fimbrial_membr_usher_CS"/>
</dbReference>
<dbReference type="InterPro" id="IPR042186">
    <property type="entry name" value="FimD_plug_dom"/>
</dbReference>
<dbReference type="InterPro" id="IPR025885">
    <property type="entry name" value="PapC_N"/>
</dbReference>
<dbReference type="InterPro" id="IPR037224">
    <property type="entry name" value="PapC_N_sf"/>
</dbReference>
<dbReference type="NCBIfam" id="NF011760">
    <property type="entry name" value="PRK15213.1"/>
    <property type="match status" value="1"/>
</dbReference>
<dbReference type="PANTHER" id="PTHR30451:SF21">
    <property type="entry name" value="FIMBRIAL USHER DOMAIN-CONTAINING PROTEIN YDET-RELATED"/>
    <property type="match status" value="1"/>
</dbReference>
<dbReference type="PANTHER" id="PTHR30451">
    <property type="entry name" value="OUTER MEMBRANE USHER PROTEIN"/>
    <property type="match status" value="1"/>
</dbReference>
<dbReference type="Pfam" id="PF13954">
    <property type="entry name" value="PapC_N"/>
    <property type="match status" value="1"/>
</dbReference>
<dbReference type="Pfam" id="PF00577">
    <property type="entry name" value="Usher"/>
    <property type="match status" value="1"/>
</dbReference>
<dbReference type="SUPFAM" id="SSF141729">
    <property type="entry name" value="FimD N-terminal domain-like"/>
    <property type="match status" value="1"/>
</dbReference>
<dbReference type="PROSITE" id="PS01151">
    <property type="entry name" value="FIMBRIAL_USHER"/>
    <property type="match status" value="1"/>
</dbReference>
<name>FAND_ECOLX</name>
<proteinExistence type="inferred from homology"/>
<sequence length="783" mass="87157">MNRKKHQILKILLLCLISSKSSASEKELNLQFIRHKFGQNTEDIELFFNSSTVLPGNYTVDVKLNDEVIGRAKLEVSQDDKESYCLKDEWLSDLGIIINRDFYNKYFNIKRECYEIGKEKNSITTFDNNSQIFSLYMPQAAYIKKGNTEHKWSYGDPGFNLNYDAYLSKNDEDSSIYGNLEGNVNIDKWVLYGRGYKYEHDKFTTDDVTLSRAIKSLEGDLIIGDTYTNTSLMDNISFYGVQLRSNNAMTPERRGDYSPIISGIAKSNARVTVKQNGVVLHSELVSPGPFHINNVRGIRSGELVMTVTEEDGSEQQTRIPVTFIANLLSPGNYNYDFGIGNKEATWEPDNIFAYGSFDYGLNLLTLNASLLFEQHYSNAGIGAVGSIGSLGAVSVSGNISRAKNQLETDQGYSTSANYSKNVGANGNLQIIGYKFSSEGYTQYANFDYRAPRKDKKEKERYEVTLTQQFPASNVFLSVTGWKKFYWNDNSVTGANVSYTQNFGTVNASVNGSYSRGDGAKSDYMLGFNINIPFRHNDRQFYSNSGVTYNRNSGIGFNAGFSEDVTKNFNYNVNAAASKDNESVSLSTNYTSSMFRTSASVSKNRNSTNASAQIGGAIIGVKDGGVMLTSMSSNSVAIVQMEGLAGYAFTNGVESDWRGRIAYPMTTYMDNDIQISTDKLPSNIELTDNVETIVPTNRAIKLQKIKYKNMSRHVLKVYDKNGFVIPMGTAVKNSNGEIISFVNNNGISLLNIDKNDERVFFGSCTISTSGLKDNLSEIQEVNCE</sequence>
<feature type="signal peptide" evidence="2">
    <location>
        <begin position="1"/>
        <end position="23"/>
    </location>
</feature>
<feature type="chain" id="PRO_0000009309" description="Outer membrane usher protein FanD">
    <location>
        <begin position="24"/>
        <end position="783"/>
    </location>
</feature>
<feature type="disulfide bond" evidence="2">
    <location>
        <begin position="763"/>
        <end position="782"/>
    </location>
</feature>
<geneLocation type="plasmid">
    <name>pFK99</name>
</geneLocation>
<keyword id="KW-0998">Cell outer membrane</keyword>
<keyword id="KW-1015">Disulfide bond</keyword>
<keyword id="KW-1029">Fimbrium biogenesis</keyword>
<keyword id="KW-0472">Membrane</keyword>
<keyword id="KW-0614">Plasmid</keyword>
<keyword id="KW-0732">Signal</keyword>
<keyword id="KW-0812">Transmembrane</keyword>
<keyword id="KW-1134">Transmembrane beta strand</keyword>
<keyword id="KW-0813">Transport</keyword>
<evidence type="ECO:0000250" key="1"/>
<evidence type="ECO:0000255" key="2"/>
<evidence type="ECO:0000305" key="3"/>
<reference key="1">
    <citation type="journal article" date="1989" name="Nucleic Acids Res.">
        <title>The nucleotide sequence of the fanD gene encoding the large outer membrane protein involved in the biosynthesis of K99 fimbriae.</title>
        <authorList>
            <person name="Roosendaal B."/>
            <person name="Bakker D."/>
            <person name="de Graaf F.K."/>
        </authorList>
    </citation>
    <scope>NUCLEOTIDE SEQUENCE [GENOMIC DNA]</scope>
    <source>
        <strain>B41</strain>
    </source>
</reference>
<reference key="2">
    <citation type="journal article" date="1984" name="FEMS Microbiol. Lett.">
        <title>The nucleotide sequence of the gene encoding the K99 subunit of enterotoxigenic Escherichia coli.</title>
        <authorList>
            <person name="Roosendaal B."/>
            <person name="Gaastra W."/>
            <person name="de Graaf F.K."/>
        </authorList>
    </citation>
    <scope>NUCLEOTIDE SEQUENCE [GENOMIC DNA] OF 1-20</scope>
</reference>
<reference key="3">
    <citation type="journal article" date="1991" name="Mol. Microbiol.">
        <title>Structure and function of periplasmic chaperone-like proteins involved in the biosynthesis of K88 and K99 fimbriae in enterotoxigenic Escherichia coli.</title>
        <authorList>
            <person name="Bakker D."/>
            <person name="Vader C.E.M."/>
            <person name="Roosendaal B."/>
            <person name="Mooi F.R."/>
            <person name="Oudega B."/>
            <person name="de Graaf F.K."/>
        </authorList>
    </citation>
    <scope>NUCLEOTIDE SEQUENCE [GENOMIC DNA] OF 770-783</scope>
    <source>
        <strain>B41</strain>
    </source>
</reference>
<comment type="function">
    <text>Involved in the export and assembly of K99 fimbrial subunits across the outer membrane.</text>
</comment>
<comment type="subcellular location">
    <subcellularLocation>
        <location evidence="1">Cell outer membrane</location>
        <topology evidence="1">Multi-pass membrane protein</topology>
    </subcellularLocation>
</comment>
<comment type="similarity">
    <text evidence="3">Belongs to the fimbrial export usher family.</text>
</comment>